<feature type="chain" id="PRO_0000307540" description="Triosephosphate isomerase">
    <location>
        <begin position="1"/>
        <end position="269"/>
    </location>
</feature>
<feature type="active site" description="Electrophile" evidence="1">
    <location>
        <position position="105"/>
    </location>
</feature>
<feature type="active site" description="Proton acceptor" evidence="1">
    <location>
        <position position="183"/>
    </location>
</feature>
<feature type="binding site" evidence="1">
    <location>
        <begin position="8"/>
        <end position="10"/>
    </location>
    <ligand>
        <name>substrate</name>
    </ligand>
</feature>
<feature type="binding site" evidence="1">
    <location>
        <position position="189"/>
    </location>
    <ligand>
        <name>substrate</name>
    </ligand>
</feature>
<feature type="binding site" evidence="1">
    <location>
        <position position="227"/>
    </location>
    <ligand>
        <name>substrate</name>
    </ligand>
</feature>
<feature type="binding site" evidence="1">
    <location>
        <begin position="248"/>
        <end position="249"/>
    </location>
    <ligand>
        <name>substrate</name>
    </ligand>
</feature>
<protein>
    <recommendedName>
        <fullName evidence="1">Triosephosphate isomerase</fullName>
        <shortName evidence="1">TIM</shortName>
        <shortName evidence="1">TPI</shortName>
        <ecNumber evidence="1">5.3.1.1</ecNumber>
    </recommendedName>
    <alternativeName>
        <fullName evidence="1">Triose-phosphate isomerase</fullName>
    </alternativeName>
</protein>
<dbReference type="EC" id="5.3.1.1" evidence="1"/>
<dbReference type="EMBL" id="CP000323">
    <property type="protein sequence ID" value="ABE73854.1"/>
    <property type="molecule type" value="Genomic_DNA"/>
</dbReference>
<dbReference type="RefSeq" id="WP_011512445.1">
    <property type="nucleotide sequence ID" value="NC_007969.1"/>
</dbReference>
<dbReference type="SMR" id="Q1QEP9"/>
<dbReference type="STRING" id="335284.Pcryo_0070"/>
<dbReference type="KEGG" id="pcr:Pcryo_0070"/>
<dbReference type="eggNOG" id="COG0149">
    <property type="taxonomic scope" value="Bacteria"/>
</dbReference>
<dbReference type="HOGENOM" id="CLU_024251_2_1_6"/>
<dbReference type="UniPathway" id="UPA00109">
    <property type="reaction ID" value="UER00189"/>
</dbReference>
<dbReference type="UniPathway" id="UPA00138"/>
<dbReference type="Proteomes" id="UP000002425">
    <property type="component" value="Chromosome"/>
</dbReference>
<dbReference type="GO" id="GO:0005829">
    <property type="term" value="C:cytosol"/>
    <property type="evidence" value="ECO:0007669"/>
    <property type="project" value="TreeGrafter"/>
</dbReference>
<dbReference type="GO" id="GO:0004807">
    <property type="term" value="F:triose-phosphate isomerase activity"/>
    <property type="evidence" value="ECO:0007669"/>
    <property type="project" value="UniProtKB-UniRule"/>
</dbReference>
<dbReference type="GO" id="GO:0006094">
    <property type="term" value="P:gluconeogenesis"/>
    <property type="evidence" value="ECO:0007669"/>
    <property type="project" value="UniProtKB-UniRule"/>
</dbReference>
<dbReference type="GO" id="GO:0046166">
    <property type="term" value="P:glyceraldehyde-3-phosphate biosynthetic process"/>
    <property type="evidence" value="ECO:0007669"/>
    <property type="project" value="TreeGrafter"/>
</dbReference>
<dbReference type="GO" id="GO:0019563">
    <property type="term" value="P:glycerol catabolic process"/>
    <property type="evidence" value="ECO:0007669"/>
    <property type="project" value="TreeGrafter"/>
</dbReference>
<dbReference type="GO" id="GO:0006096">
    <property type="term" value="P:glycolytic process"/>
    <property type="evidence" value="ECO:0007669"/>
    <property type="project" value="UniProtKB-UniRule"/>
</dbReference>
<dbReference type="CDD" id="cd00311">
    <property type="entry name" value="TIM"/>
    <property type="match status" value="1"/>
</dbReference>
<dbReference type="Gene3D" id="3.20.20.70">
    <property type="entry name" value="Aldolase class I"/>
    <property type="match status" value="1"/>
</dbReference>
<dbReference type="HAMAP" id="MF_00147_B">
    <property type="entry name" value="TIM_B"/>
    <property type="match status" value="1"/>
</dbReference>
<dbReference type="InterPro" id="IPR013785">
    <property type="entry name" value="Aldolase_TIM"/>
</dbReference>
<dbReference type="InterPro" id="IPR035990">
    <property type="entry name" value="TIM_sf"/>
</dbReference>
<dbReference type="InterPro" id="IPR022896">
    <property type="entry name" value="TrioseP_Isoase_bac/euk"/>
</dbReference>
<dbReference type="InterPro" id="IPR000652">
    <property type="entry name" value="Triosephosphate_isomerase"/>
</dbReference>
<dbReference type="InterPro" id="IPR020861">
    <property type="entry name" value="Triosephosphate_isomerase_AS"/>
</dbReference>
<dbReference type="NCBIfam" id="TIGR00419">
    <property type="entry name" value="tim"/>
    <property type="match status" value="1"/>
</dbReference>
<dbReference type="PANTHER" id="PTHR21139">
    <property type="entry name" value="TRIOSEPHOSPHATE ISOMERASE"/>
    <property type="match status" value="1"/>
</dbReference>
<dbReference type="PANTHER" id="PTHR21139:SF42">
    <property type="entry name" value="TRIOSEPHOSPHATE ISOMERASE"/>
    <property type="match status" value="1"/>
</dbReference>
<dbReference type="Pfam" id="PF00121">
    <property type="entry name" value="TIM"/>
    <property type="match status" value="1"/>
</dbReference>
<dbReference type="SUPFAM" id="SSF51351">
    <property type="entry name" value="Triosephosphate isomerase (TIM)"/>
    <property type="match status" value="1"/>
</dbReference>
<dbReference type="PROSITE" id="PS00171">
    <property type="entry name" value="TIM_1"/>
    <property type="match status" value="1"/>
</dbReference>
<dbReference type="PROSITE" id="PS51440">
    <property type="entry name" value="TIM_2"/>
    <property type="match status" value="1"/>
</dbReference>
<reference key="1">
    <citation type="submission" date="2006-03" db="EMBL/GenBank/DDBJ databases">
        <title>Complete sequence of chromosome of Psychrobacter cryohalolentis K5.</title>
        <authorList>
            <consortium name="US DOE Joint Genome Institute"/>
            <person name="Copeland A."/>
            <person name="Lucas S."/>
            <person name="Lapidus A."/>
            <person name="Barry K."/>
            <person name="Detter J.C."/>
            <person name="Glavina T."/>
            <person name="Hammon N."/>
            <person name="Israni S."/>
            <person name="Dalin E."/>
            <person name="Tice H."/>
            <person name="Pitluck S."/>
            <person name="Brettin T."/>
            <person name="Bruce D."/>
            <person name="Han C."/>
            <person name="Tapia R."/>
            <person name="Sims D.R."/>
            <person name="Gilna P."/>
            <person name="Schmutz J."/>
            <person name="Larimer F."/>
            <person name="Land M."/>
            <person name="Hauser L."/>
            <person name="Kyrpides N."/>
            <person name="Kim E."/>
            <person name="Richardson P."/>
        </authorList>
    </citation>
    <scope>NUCLEOTIDE SEQUENCE [LARGE SCALE GENOMIC DNA]</scope>
    <source>
        <strain>ATCC BAA-1226 / DSM 17306 / VKM B-2378 / K5</strain>
    </source>
</reference>
<name>TPIS_PSYCK</name>
<keyword id="KW-0963">Cytoplasm</keyword>
<keyword id="KW-0312">Gluconeogenesis</keyword>
<keyword id="KW-0324">Glycolysis</keyword>
<keyword id="KW-0413">Isomerase</keyword>
<accession>Q1QEP9</accession>
<comment type="function">
    <text evidence="1">Involved in the gluconeogenesis. Catalyzes stereospecifically the conversion of dihydroxyacetone phosphate (DHAP) to D-glyceraldehyde-3-phosphate (G3P).</text>
</comment>
<comment type="catalytic activity">
    <reaction evidence="1">
        <text>D-glyceraldehyde 3-phosphate = dihydroxyacetone phosphate</text>
        <dbReference type="Rhea" id="RHEA:18585"/>
        <dbReference type="ChEBI" id="CHEBI:57642"/>
        <dbReference type="ChEBI" id="CHEBI:59776"/>
        <dbReference type="EC" id="5.3.1.1"/>
    </reaction>
</comment>
<comment type="pathway">
    <text evidence="1">Carbohydrate biosynthesis; gluconeogenesis.</text>
</comment>
<comment type="pathway">
    <text evidence="1">Carbohydrate degradation; glycolysis; D-glyceraldehyde 3-phosphate from glycerone phosphate: step 1/1.</text>
</comment>
<comment type="subunit">
    <text evidence="1">Homodimer.</text>
</comment>
<comment type="subcellular location">
    <subcellularLocation>
        <location evidence="1">Cytoplasm</location>
    </subcellularLocation>
</comment>
<comment type="similarity">
    <text evidence="1">Belongs to the triosephosphate isomerase family.</text>
</comment>
<sequence length="269" mass="28697">MQAWVIGNWKQNPATSHDVNALLDDLCAAISTTKQMSHDNSARCQIMVAPSFIHLAAVNGRLKDTSILCAAQDVSGHSASVGAYTGDCSAQQIVDAGATWTILGHSERRQYHQESNDTLLQKMIHALSQDLGVVFCIGESQAQYDTKQTLEVIDNQLAVIKEFITQQPELIKALPTRLIIAYEPVWAIGTGKVPTVAEVSATHKHIKQILAGFADSLSNMTVLYGGSVNADNANSFAADPMIDGALVGGASLKADSFLTIATAFSQASI</sequence>
<evidence type="ECO:0000255" key="1">
    <source>
        <dbReference type="HAMAP-Rule" id="MF_00147"/>
    </source>
</evidence>
<gene>
    <name evidence="1" type="primary">tpiA</name>
    <name type="ordered locus">Pcryo_0070</name>
</gene>
<organism>
    <name type="scientific">Psychrobacter cryohalolentis (strain ATCC BAA-1226 / DSM 17306 / VKM B-2378 / K5)</name>
    <dbReference type="NCBI Taxonomy" id="335284"/>
    <lineage>
        <taxon>Bacteria</taxon>
        <taxon>Pseudomonadati</taxon>
        <taxon>Pseudomonadota</taxon>
        <taxon>Gammaproteobacteria</taxon>
        <taxon>Moraxellales</taxon>
        <taxon>Moraxellaceae</taxon>
        <taxon>Psychrobacter</taxon>
    </lineage>
</organism>
<proteinExistence type="inferred from homology"/>